<feature type="chain" id="PRO_1000060168" description="Na(+)-translocating NADH-quinone reductase subunit D">
    <location>
        <begin position="1"/>
        <end position="210"/>
    </location>
</feature>
<feature type="transmembrane region" description="Helical" evidence="1">
    <location>
        <begin position="14"/>
        <end position="34"/>
    </location>
</feature>
<feature type="transmembrane region" description="Helical" evidence="1">
    <location>
        <begin position="42"/>
        <end position="62"/>
    </location>
</feature>
<feature type="transmembrane region" description="Helical" evidence="1">
    <location>
        <begin position="72"/>
        <end position="92"/>
    </location>
</feature>
<feature type="transmembrane region" description="Helical" evidence="1">
    <location>
        <begin position="96"/>
        <end position="116"/>
    </location>
</feature>
<feature type="transmembrane region" description="Helical" evidence="1">
    <location>
        <begin position="131"/>
        <end position="151"/>
    </location>
</feature>
<feature type="transmembrane region" description="Helical" evidence="1">
    <location>
        <begin position="178"/>
        <end position="198"/>
    </location>
</feature>
<accession>Q086L0</accession>
<dbReference type="EC" id="7.2.1.1" evidence="1"/>
<dbReference type="EMBL" id="CP000447">
    <property type="protein sequence ID" value="ABI70805.1"/>
    <property type="molecule type" value="Genomic_DNA"/>
</dbReference>
<dbReference type="RefSeq" id="WP_011636426.1">
    <property type="nucleotide sequence ID" value="NC_008345.1"/>
</dbReference>
<dbReference type="SMR" id="Q086L0"/>
<dbReference type="STRING" id="318167.Sfri_0952"/>
<dbReference type="KEGG" id="sfr:Sfri_0952"/>
<dbReference type="eggNOG" id="COG1347">
    <property type="taxonomic scope" value="Bacteria"/>
</dbReference>
<dbReference type="HOGENOM" id="CLU_046659_1_1_6"/>
<dbReference type="OrthoDB" id="9782945at2"/>
<dbReference type="Proteomes" id="UP000000684">
    <property type="component" value="Chromosome"/>
</dbReference>
<dbReference type="GO" id="GO:0005886">
    <property type="term" value="C:plasma membrane"/>
    <property type="evidence" value="ECO:0007669"/>
    <property type="project" value="UniProtKB-SubCell"/>
</dbReference>
<dbReference type="GO" id="GO:0016655">
    <property type="term" value="F:oxidoreductase activity, acting on NAD(P)H, quinone or similar compound as acceptor"/>
    <property type="evidence" value="ECO:0007669"/>
    <property type="project" value="UniProtKB-UniRule"/>
</dbReference>
<dbReference type="GO" id="GO:0006814">
    <property type="term" value="P:sodium ion transport"/>
    <property type="evidence" value="ECO:0007669"/>
    <property type="project" value="UniProtKB-UniRule"/>
</dbReference>
<dbReference type="HAMAP" id="MF_00428">
    <property type="entry name" value="NqrD"/>
    <property type="match status" value="1"/>
</dbReference>
<dbReference type="InterPro" id="IPR011292">
    <property type="entry name" value="NqrD"/>
</dbReference>
<dbReference type="InterPro" id="IPR003667">
    <property type="entry name" value="NqrDE/RnfAE"/>
</dbReference>
<dbReference type="NCBIfam" id="TIGR01939">
    <property type="entry name" value="nqrD"/>
    <property type="match status" value="1"/>
</dbReference>
<dbReference type="NCBIfam" id="NF006777">
    <property type="entry name" value="PRK09292.1"/>
    <property type="match status" value="1"/>
</dbReference>
<dbReference type="NCBIfam" id="NF009070">
    <property type="entry name" value="PRK12405.1"/>
    <property type="match status" value="1"/>
</dbReference>
<dbReference type="PANTHER" id="PTHR30586">
    <property type="entry name" value="ELECTRON TRANSPORT COMPLEX PROTEIN RNFE"/>
    <property type="match status" value="1"/>
</dbReference>
<dbReference type="PANTHER" id="PTHR30586:SF1">
    <property type="entry name" value="NA(+)-TRANSLOCATING NADH-QUINONE REDUCTASE SUBUNIT D"/>
    <property type="match status" value="1"/>
</dbReference>
<dbReference type="Pfam" id="PF02508">
    <property type="entry name" value="Rnf-Nqr"/>
    <property type="match status" value="1"/>
</dbReference>
<dbReference type="PIRSF" id="PIRSF006102">
    <property type="entry name" value="NQR_DE"/>
    <property type="match status" value="1"/>
</dbReference>
<protein>
    <recommendedName>
        <fullName evidence="1">Na(+)-translocating NADH-quinone reductase subunit D</fullName>
        <shortName evidence="1">Na(+)-NQR subunit D</shortName>
        <shortName evidence="1">Na(+)-translocating NQR subunit D</shortName>
        <ecNumber evidence="1">7.2.1.1</ecNumber>
    </recommendedName>
    <alternativeName>
        <fullName evidence="1">NQR complex subunit D</fullName>
    </alternativeName>
    <alternativeName>
        <fullName evidence="1">NQR-1 subunit D</fullName>
    </alternativeName>
</protein>
<reference key="1">
    <citation type="submission" date="2006-08" db="EMBL/GenBank/DDBJ databases">
        <title>Complete sequence of Shewanella frigidimarina NCIMB 400.</title>
        <authorList>
            <consortium name="US DOE Joint Genome Institute"/>
            <person name="Copeland A."/>
            <person name="Lucas S."/>
            <person name="Lapidus A."/>
            <person name="Barry K."/>
            <person name="Detter J.C."/>
            <person name="Glavina del Rio T."/>
            <person name="Hammon N."/>
            <person name="Israni S."/>
            <person name="Dalin E."/>
            <person name="Tice H."/>
            <person name="Pitluck S."/>
            <person name="Fredrickson J.K."/>
            <person name="Kolker E."/>
            <person name="McCuel L.A."/>
            <person name="DiChristina T."/>
            <person name="Nealson K.H."/>
            <person name="Newman D."/>
            <person name="Tiedje J.M."/>
            <person name="Zhou J."/>
            <person name="Romine M.F."/>
            <person name="Culley D.E."/>
            <person name="Serres M."/>
            <person name="Chertkov O."/>
            <person name="Brettin T."/>
            <person name="Bruce D."/>
            <person name="Han C."/>
            <person name="Tapia R."/>
            <person name="Gilna P."/>
            <person name="Schmutz J."/>
            <person name="Larimer F."/>
            <person name="Land M."/>
            <person name="Hauser L."/>
            <person name="Kyrpides N."/>
            <person name="Mikhailova N."/>
            <person name="Richardson P."/>
        </authorList>
    </citation>
    <scope>NUCLEOTIDE SEQUENCE [LARGE SCALE GENOMIC DNA]</scope>
    <source>
        <strain>NCIMB 400</strain>
    </source>
</reference>
<proteinExistence type="inferred from homology"/>
<comment type="function">
    <text evidence="1">NQR complex catalyzes the reduction of ubiquinone-1 to ubiquinol by two successive reactions, coupled with the transport of Na(+) ions from the cytoplasm to the periplasm. NqrA to NqrE are probably involved in the second step, the conversion of ubisemiquinone to ubiquinol.</text>
</comment>
<comment type="catalytic activity">
    <reaction evidence="1">
        <text>a ubiquinone + n Na(+)(in) + NADH + H(+) = a ubiquinol + n Na(+)(out) + NAD(+)</text>
        <dbReference type="Rhea" id="RHEA:47748"/>
        <dbReference type="Rhea" id="RHEA-COMP:9565"/>
        <dbReference type="Rhea" id="RHEA-COMP:9566"/>
        <dbReference type="ChEBI" id="CHEBI:15378"/>
        <dbReference type="ChEBI" id="CHEBI:16389"/>
        <dbReference type="ChEBI" id="CHEBI:17976"/>
        <dbReference type="ChEBI" id="CHEBI:29101"/>
        <dbReference type="ChEBI" id="CHEBI:57540"/>
        <dbReference type="ChEBI" id="CHEBI:57945"/>
        <dbReference type="EC" id="7.2.1.1"/>
    </reaction>
</comment>
<comment type="subunit">
    <text evidence="1">Composed of six subunits; NqrA, NqrB, NqrC, NqrD, NqrE and NqrF.</text>
</comment>
<comment type="subcellular location">
    <subcellularLocation>
        <location evidence="1">Cell inner membrane</location>
        <topology evidence="1">Multi-pass membrane protein</topology>
    </subcellularLocation>
</comment>
<comment type="similarity">
    <text evidence="1">Belongs to the NqrDE/RnfAE family.</text>
</comment>
<gene>
    <name evidence="1" type="primary">nqrD</name>
    <name type="ordered locus">Sfri_0952</name>
</gene>
<name>NQRD_SHEFN</name>
<keyword id="KW-0997">Cell inner membrane</keyword>
<keyword id="KW-1003">Cell membrane</keyword>
<keyword id="KW-0406">Ion transport</keyword>
<keyword id="KW-0472">Membrane</keyword>
<keyword id="KW-0520">NAD</keyword>
<keyword id="KW-1185">Reference proteome</keyword>
<keyword id="KW-0915">Sodium</keyword>
<keyword id="KW-0739">Sodium transport</keyword>
<keyword id="KW-1278">Translocase</keyword>
<keyword id="KW-0812">Transmembrane</keyword>
<keyword id="KW-1133">Transmembrane helix</keyword>
<keyword id="KW-0813">Transport</keyword>
<keyword id="KW-0830">Ubiquinone</keyword>
<organism>
    <name type="scientific">Shewanella frigidimarina (strain NCIMB 400)</name>
    <dbReference type="NCBI Taxonomy" id="318167"/>
    <lineage>
        <taxon>Bacteria</taxon>
        <taxon>Pseudomonadati</taxon>
        <taxon>Pseudomonadota</taxon>
        <taxon>Gammaproteobacteria</taxon>
        <taxon>Alteromonadales</taxon>
        <taxon>Shewanellaceae</taxon>
        <taxon>Shewanella</taxon>
    </lineage>
</organism>
<evidence type="ECO:0000255" key="1">
    <source>
        <dbReference type="HAMAP-Rule" id="MF_00428"/>
    </source>
</evidence>
<sequence>MADAKELKQVLTGPIINNNPIALQILGVCSALAVTSKLETALVMTIALTAVTAFSNLFISLIRNHIPSSVRIIVQMTIIASLVIVVDQVLQAYAYAISKQLSVFVGLIITNCIVMGRAEAYAMKTPPMMSFMDGIGNGLGYGAILLSVGVVRELFGNGSLFGVEILSKISDGGWYQPNGLLLLPPSAFFLIGGLIWLIRTYKPEQVEAKG</sequence>